<comment type="function">
    <text evidence="1">Catalyzes the conversion of (8S)-3',8-cyclo-7,8-dihydroguanosine 5'-triphosphate to cyclic pyranopterin monophosphate (cPMP).</text>
</comment>
<comment type="catalytic activity">
    <reaction evidence="1">
        <text>(8S)-3',8-cyclo-7,8-dihydroguanosine 5'-triphosphate = cyclic pyranopterin phosphate + diphosphate</text>
        <dbReference type="Rhea" id="RHEA:49580"/>
        <dbReference type="ChEBI" id="CHEBI:33019"/>
        <dbReference type="ChEBI" id="CHEBI:59648"/>
        <dbReference type="ChEBI" id="CHEBI:131766"/>
        <dbReference type="EC" id="4.6.1.17"/>
    </reaction>
</comment>
<comment type="pathway">
    <text evidence="1">Cofactor biosynthesis; molybdopterin biosynthesis.</text>
</comment>
<comment type="subunit">
    <text evidence="1">Homohexamer; trimer of dimers.</text>
</comment>
<comment type="similarity">
    <text evidence="1">Belongs to the MoaC family.</text>
</comment>
<accession>Q2RQI5</accession>
<name>MOAC_RHORT</name>
<gene>
    <name evidence="1" type="primary">moaC</name>
    <name type="ordered locus">Rru_A2813</name>
</gene>
<proteinExistence type="inferred from homology"/>
<evidence type="ECO:0000255" key="1">
    <source>
        <dbReference type="HAMAP-Rule" id="MF_01224"/>
    </source>
</evidence>
<feature type="chain" id="PRO_1000054129" description="Cyclic pyranopterin monophosphate synthase">
    <location>
        <begin position="1"/>
        <end position="166"/>
    </location>
</feature>
<feature type="active site" evidence="1">
    <location>
        <position position="136"/>
    </location>
</feature>
<feature type="binding site" evidence="1">
    <location>
        <begin position="83"/>
        <end position="85"/>
    </location>
    <ligand>
        <name>substrate</name>
    </ligand>
</feature>
<feature type="binding site" evidence="1">
    <location>
        <begin position="121"/>
        <end position="122"/>
    </location>
    <ligand>
        <name>substrate</name>
    </ligand>
</feature>
<organism>
    <name type="scientific">Rhodospirillum rubrum (strain ATCC 11170 / ATH 1.1.1 / DSM 467 / LMG 4362 / NCIMB 8255 / S1)</name>
    <dbReference type="NCBI Taxonomy" id="269796"/>
    <lineage>
        <taxon>Bacteria</taxon>
        <taxon>Pseudomonadati</taxon>
        <taxon>Pseudomonadota</taxon>
        <taxon>Alphaproteobacteria</taxon>
        <taxon>Rhodospirillales</taxon>
        <taxon>Rhodospirillaceae</taxon>
        <taxon>Rhodospirillum</taxon>
    </lineage>
</organism>
<sequence length="166" mass="17227">MTDPAPATADGLTHFDTAGNAVMVDVSAKDETERVAVAGGCVEMAPATLRAIIERGLKKGDVLSVAQLAGIMGAKRTPDLIPLCHPLALTKVAVELTPDPDHDRVVITATCALRGRTGVEMEALTAVAVAGLTVYDMCKAVDKGMRLTDIRLLSKTGGKSGTWTAS</sequence>
<dbReference type="EC" id="4.6.1.17" evidence="1"/>
<dbReference type="EMBL" id="CP000230">
    <property type="protein sequence ID" value="ABC23610.1"/>
    <property type="molecule type" value="Genomic_DNA"/>
</dbReference>
<dbReference type="RefSeq" id="WP_011390440.1">
    <property type="nucleotide sequence ID" value="NC_007643.1"/>
</dbReference>
<dbReference type="RefSeq" id="YP_427897.1">
    <property type="nucleotide sequence ID" value="NC_007643.1"/>
</dbReference>
<dbReference type="SMR" id="Q2RQI5"/>
<dbReference type="STRING" id="269796.Rru_A2813"/>
<dbReference type="EnsemblBacteria" id="ABC23610">
    <property type="protein sequence ID" value="ABC23610"/>
    <property type="gene ID" value="Rru_A2813"/>
</dbReference>
<dbReference type="KEGG" id="rru:Rru_A2813"/>
<dbReference type="PATRIC" id="fig|269796.9.peg.2919"/>
<dbReference type="eggNOG" id="COG0315">
    <property type="taxonomic scope" value="Bacteria"/>
</dbReference>
<dbReference type="HOGENOM" id="CLU_074693_1_1_5"/>
<dbReference type="PhylomeDB" id="Q2RQI5"/>
<dbReference type="UniPathway" id="UPA00344"/>
<dbReference type="Proteomes" id="UP000001929">
    <property type="component" value="Chromosome"/>
</dbReference>
<dbReference type="GO" id="GO:0061799">
    <property type="term" value="F:cyclic pyranopterin monophosphate synthase activity"/>
    <property type="evidence" value="ECO:0007669"/>
    <property type="project" value="UniProtKB-UniRule"/>
</dbReference>
<dbReference type="GO" id="GO:0006777">
    <property type="term" value="P:Mo-molybdopterin cofactor biosynthetic process"/>
    <property type="evidence" value="ECO:0007669"/>
    <property type="project" value="UniProtKB-UniRule"/>
</dbReference>
<dbReference type="CDD" id="cd01420">
    <property type="entry name" value="MoaC_PE"/>
    <property type="match status" value="1"/>
</dbReference>
<dbReference type="Gene3D" id="3.30.70.640">
    <property type="entry name" value="Molybdopterin cofactor biosynthesis C (MoaC) domain"/>
    <property type="match status" value="1"/>
</dbReference>
<dbReference type="HAMAP" id="MF_01224_B">
    <property type="entry name" value="MoaC_B"/>
    <property type="match status" value="1"/>
</dbReference>
<dbReference type="InterPro" id="IPR023045">
    <property type="entry name" value="MoaC"/>
</dbReference>
<dbReference type="InterPro" id="IPR047594">
    <property type="entry name" value="MoaC_bact/euk"/>
</dbReference>
<dbReference type="InterPro" id="IPR036522">
    <property type="entry name" value="MoaC_sf"/>
</dbReference>
<dbReference type="InterPro" id="IPR050105">
    <property type="entry name" value="MoCo_biosynth_MoaA/MoaC"/>
</dbReference>
<dbReference type="InterPro" id="IPR002820">
    <property type="entry name" value="Mopterin_CF_biosynth-C_dom"/>
</dbReference>
<dbReference type="NCBIfam" id="TIGR00581">
    <property type="entry name" value="moaC"/>
    <property type="match status" value="1"/>
</dbReference>
<dbReference type="NCBIfam" id="NF006870">
    <property type="entry name" value="PRK09364.1"/>
    <property type="match status" value="1"/>
</dbReference>
<dbReference type="PANTHER" id="PTHR22960:SF29">
    <property type="entry name" value="CYCLIC PYRANOPTERIN MONOPHOSPHATE SYNTHASE"/>
    <property type="match status" value="1"/>
</dbReference>
<dbReference type="PANTHER" id="PTHR22960">
    <property type="entry name" value="MOLYBDOPTERIN COFACTOR SYNTHESIS PROTEIN A"/>
    <property type="match status" value="1"/>
</dbReference>
<dbReference type="Pfam" id="PF01967">
    <property type="entry name" value="MoaC"/>
    <property type="match status" value="1"/>
</dbReference>
<dbReference type="SUPFAM" id="SSF55040">
    <property type="entry name" value="Molybdenum cofactor biosynthesis protein C, MoaC"/>
    <property type="match status" value="1"/>
</dbReference>
<reference key="1">
    <citation type="journal article" date="2011" name="Stand. Genomic Sci.">
        <title>Complete genome sequence of Rhodospirillum rubrum type strain (S1).</title>
        <authorList>
            <person name="Munk A.C."/>
            <person name="Copeland A."/>
            <person name="Lucas S."/>
            <person name="Lapidus A."/>
            <person name="Del Rio T.G."/>
            <person name="Barry K."/>
            <person name="Detter J.C."/>
            <person name="Hammon N."/>
            <person name="Israni S."/>
            <person name="Pitluck S."/>
            <person name="Brettin T."/>
            <person name="Bruce D."/>
            <person name="Han C."/>
            <person name="Tapia R."/>
            <person name="Gilna P."/>
            <person name="Schmutz J."/>
            <person name="Larimer F."/>
            <person name="Land M."/>
            <person name="Kyrpides N.C."/>
            <person name="Mavromatis K."/>
            <person name="Richardson P."/>
            <person name="Rohde M."/>
            <person name="Goeker M."/>
            <person name="Klenk H.P."/>
            <person name="Zhang Y."/>
            <person name="Roberts G.P."/>
            <person name="Reslewic S."/>
            <person name="Schwartz D.C."/>
        </authorList>
    </citation>
    <scope>NUCLEOTIDE SEQUENCE [LARGE SCALE GENOMIC DNA]</scope>
    <source>
        <strain>ATCC 11170 / ATH 1.1.1 / DSM 467 / LMG 4362 / NCIMB 8255 / S1</strain>
    </source>
</reference>
<keyword id="KW-0456">Lyase</keyword>
<keyword id="KW-0501">Molybdenum cofactor biosynthesis</keyword>
<keyword id="KW-1185">Reference proteome</keyword>
<protein>
    <recommendedName>
        <fullName evidence="1">Cyclic pyranopterin monophosphate synthase</fullName>
        <ecNumber evidence="1">4.6.1.17</ecNumber>
    </recommendedName>
    <alternativeName>
        <fullName evidence="1">Molybdenum cofactor biosynthesis protein C</fullName>
    </alternativeName>
</protein>